<dbReference type="EMBL" id="CR749645">
    <property type="protein sequence ID" value="CAH18439.1"/>
    <property type="molecule type" value="mRNA"/>
</dbReference>
<dbReference type="EMBL" id="AC007497">
    <property type="status" value="NOT_ANNOTATED_CDS"/>
    <property type="molecule type" value="Genomic_DNA"/>
</dbReference>
<dbReference type="EMBL" id="AC007909">
    <property type="status" value="NOT_ANNOTATED_CDS"/>
    <property type="molecule type" value="Genomic_DNA"/>
</dbReference>
<dbReference type="EMBL" id="AC084795">
    <property type="status" value="NOT_ANNOTATED_CDS"/>
    <property type="molecule type" value="Genomic_DNA"/>
</dbReference>
<dbReference type="EMBL" id="BC017977">
    <property type="protein sequence ID" value="AAH17977.1"/>
    <property type="status" value="ALT_TERM"/>
    <property type="molecule type" value="mRNA"/>
</dbReference>
<dbReference type="EMBL" id="AB023222">
    <property type="protein sequence ID" value="BAA76849.1"/>
    <property type="molecule type" value="mRNA"/>
</dbReference>
<dbReference type="CCDS" id="CCDS32447.1">
    <molecule id="Q68CZ1-1"/>
</dbReference>
<dbReference type="CCDS" id="CCDS45486.1">
    <molecule id="Q68CZ1-2"/>
</dbReference>
<dbReference type="RefSeq" id="NP_001121369.1">
    <molecule id="Q68CZ1-2"/>
    <property type="nucleotide sequence ID" value="NM_001127897.4"/>
</dbReference>
<dbReference type="RefSeq" id="NP_056087.2">
    <molecule id="Q68CZ1-1"/>
    <property type="nucleotide sequence ID" value="NM_015272.5"/>
</dbReference>
<dbReference type="RefSeq" id="XP_047289826.1">
    <molecule id="Q68CZ1-1"/>
    <property type="nucleotide sequence ID" value="XM_047433870.1"/>
</dbReference>
<dbReference type="RefSeq" id="XP_047289828.1">
    <molecule id="Q68CZ1-2"/>
    <property type="nucleotide sequence ID" value="XM_047433872.1"/>
</dbReference>
<dbReference type="RefSeq" id="XP_054235934.1">
    <molecule id="Q68CZ1-2"/>
    <property type="nucleotide sequence ID" value="XM_054379959.1"/>
</dbReference>
<dbReference type="PDB" id="2YRB">
    <property type="method" value="NMR"/>
    <property type="chains" value="A=595-737"/>
</dbReference>
<dbReference type="PDBsum" id="2YRB"/>
<dbReference type="SMR" id="Q68CZ1"/>
<dbReference type="BioGRID" id="116911">
    <property type="interactions" value="187"/>
</dbReference>
<dbReference type="ComplexPortal" id="CPX-2806">
    <property type="entry name" value="NPHP transition zone complex"/>
</dbReference>
<dbReference type="CORUM" id="Q68CZ1"/>
<dbReference type="FunCoup" id="Q68CZ1">
    <property type="interactions" value="1567"/>
</dbReference>
<dbReference type="IntAct" id="Q68CZ1">
    <property type="interactions" value="166"/>
</dbReference>
<dbReference type="MINT" id="Q68CZ1"/>
<dbReference type="STRING" id="9606.ENSP00000493946"/>
<dbReference type="GlyGen" id="Q68CZ1">
    <property type="glycosylation" value="1 site, 1 O-linked glycan (1 site)"/>
</dbReference>
<dbReference type="iPTMnet" id="Q68CZ1"/>
<dbReference type="PhosphoSitePlus" id="Q68CZ1"/>
<dbReference type="BioMuta" id="RPGRIP1L"/>
<dbReference type="DMDM" id="296434514"/>
<dbReference type="jPOST" id="Q68CZ1"/>
<dbReference type="MassIVE" id="Q68CZ1"/>
<dbReference type="PaxDb" id="9606-ENSP00000369257"/>
<dbReference type="PeptideAtlas" id="Q68CZ1"/>
<dbReference type="ProteomicsDB" id="66034">
    <molecule id="Q68CZ1-1"/>
</dbReference>
<dbReference type="ProteomicsDB" id="66035">
    <molecule id="Q68CZ1-2"/>
</dbReference>
<dbReference type="Pumba" id="Q68CZ1"/>
<dbReference type="Antibodypedia" id="28413">
    <property type="antibodies" value="108 antibodies from 27 providers"/>
</dbReference>
<dbReference type="DNASU" id="23322"/>
<dbReference type="Ensembl" id="ENST00000262135.9">
    <molecule id="Q68CZ1-2"/>
    <property type="protein sequence ID" value="ENSP00000262135.4"/>
    <property type="gene ID" value="ENSG00000103494.16"/>
</dbReference>
<dbReference type="Ensembl" id="ENST00000647211.2">
    <molecule id="Q68CZ1-1"/>
    <property type="protein sequence ID" value="ENSP00000493946.1"/>
    <property type="gene ID" value="ENSG00000103494.16"/>
</dbReference>
<dbReference type="GeneID" id="23322"/>
<dbReference type="KEGG" id="hsa:23322"/>
<dbReference type="MANE-Select" id="ENST00000647211.2">
    <property type="protein sequence ID" value="ENSP00000493946.1"/>
    <property type="RefSeq nucleotide sequence ID" value="NM_015272.5"/>
    <property type="RefSeq protein sequence ID" value="NP_056087.2"/>
</dbReference>
<dbReference type="UCSC" id="uc002eho.5">
    <molecule id="Q68CZ1-1"/>
    <property type="organism name" value="human"/>
</dbReference>
<dbReference type="AGR" id="HGNC:29168"/>
<dbReference type="CTD" id="23322"/>
<dbReference type="DisGeNET" id="23322"/>
<dbReference type="GeneCards" id="RPGRIP1L"/>
<dbReference type="GeneReviews" id="RPGRIP1L"/>
<dbReference type="HGNC" id="HGNC:29168">
    <property type="gene designation" value="RPGRIP1L"/>
</dbReference>
<dbReference type="HPA" id="ENSG00000103494">
    <property type="expression patterns" value="Tissue enhanced (testis)"/>
</dbReference>
<dbReference type="MalaCards" id="RPGRIP1L"/>
<dbReference type="MIM" id="610937">
    <property type="type" value="gene"/>
</dbReference>
<dbReference type="MIM" id="611560">
    <property type="type" value="phenotype"/>
</dbReference>
<dbReference type="MIM" id="611561">
    <property type="type" value="phenotype"/>
</dbReference>
<dbReference type="MIM" id="619113">
    <property type="type" value="phenotype"/>
</dbReference>
<dbReference type="neXtProt" id="NX_Q68CZ1"/>
<dbReference type="OpenTargets" id="ENSG00000103494"/>
<dbReference type="Orphanet" id="1454">
    <property type="disease" value="Joubert syndrome with hepatic defect"/>
</dbReference>
<dbReference type="Orphanet" id="220497">
    <property type="disease" value="Joubert syndrome with renal defect"/>
</dbReference>
<dbReference type="Orphanet" id="564">
    <property type="disease" value="Meckel syndrome"/>
</dbReference>
<dbReference type="PharmGKB" id="PA162401983"/>
<dbReference type="VEuPathDB" id="HostDB:ENSG00000103494"/>
<dbReference type="eggNOG" id="ENOG502QSQG">
    <property type="taxonomic scope" value="Eukaryota"/>
</dbReference>
<dbReference type="GeneTree" id="ENSGT00520000055620"/>
<dbReference type="HOGENOM" id="CLU_002108_0_0_1"/>
<dbReference type="InParanoid" id="Q68CZ1"/>
<dbReference type="OMA" id="HMERIRF"/>
<dbReference type="OrthoDB" id="2133912at2759"/>
<dbReference type="PAN-GO" id="Q68CZ1">
    <property type="GO annotations" value="4 GO annotations based on evolutionary models"/>
</dbReference>
<dbReference type="PhylomeDB" id="Q68CZ1"/>
<dbReference type="TreeFam" id="TF328883"/>
<dbReference type="PathwayCommons" id="Q68CZ1"/>
<dbReference type="Reactome" id="R-HSA-5610787">
    <property type="pathway name" value="Hedgehog 'off' state"/>
</dbReference>
<dbReference type="Reactome" id="R-HSA-5620912">
    <property type="pathway name" value="Anchoring of the basal body to the plasma membrane"/>
</dbReference>
<dbReference type="SignaLink" id="Q68CZ1"/>
<dbReference type="SIGNOR" id="Q68CZ1"/>
<dbReference type="BioGRID-ORCS" id="23322">
    <property type="hits" value="32 hits in 1149 CRISPR screens"/>
</dbReference>
<dbReference type="ChiTaRS" id="RPGRIP1L">
    <property type="organism name" value="human"/>
</dbReference>
<dbReference type="EvolutionaryTrace" id="Q68CZ1"/>
<dbReference type="GenomeRNAi" id="23322"/>
<dbReference type="Pharos" id="Q68CZ1">
    <property type="development level" value="Tbio"/>
</dbReference>
<dbReference type="PRO" id="PR:Q68CZ1"/>
<dbReference type="Proteomes" id="UP000005640">
    <property type="component" value="Chromosome 16"/>
</dbReference>
<dbReference type="RNAct" id="Q68CZ1">
    <property type="molecule type" value="protein"/>
</dbReference>
<dbReference type="Bgee" id="ENSG00000103494">
    <property type="expression patterns" value="Expressed in bronchial epithelial cell and 133 other cell types or tissues"/>
</dbReference>
<dbReference type="ExpressionAtlas" id="Q68CZ1">
    <property type="expression patterns" value="baseline and differential"/>
</dbReference>
<dbReference type="GO" id="GO:0005930">
    <property type="term" value="C:axoneme"/>
    <property type="evidence" value="ECO:0000314"/>
    <property type="project" value="MGI"/>
</dbReference>
<dbReference type="GO" id="GO:0005923">
    <property type="term" value="C:bicellular tight junction"/>
    <property type="evidence" value="ECO:0007669"/>
    <property type="project" value="UniProtKB-SubCell"/>
</dbReference>
<dbReference type="GO" id="GO:0005911">
    <property type="term" value="C:cell-cell junction"/>
    <property type="evidence" value="ECO:0000314"/>
    <property type="project" value="UniProtKB"/>
</dbReference>
<dbReference type="GO" id="GO:0005813">
    <property type="term" value="C:centrosome"/>
    <property type="evidence" value="ECO:0000314"/>
    <property type="project" value="UniProtKB"/>
</dbReference>
<dbReference type="GO" id="GO:0036064">
    <property type="term" value="C:ciliary basal body"/>
    <property type="evidence" value="ECO:0000314"/>
    <property type="project" value="HPA"/>
</dbReference>
<dbReference type="GO" id="GO:0035869">
    <property type="term" value="C:ciliary transition zone"/>
    <property type="evidence" value="ECO:0000314"/>
    <property type="project" value="WormBase"/>
</dbReference>
<dbReference type="GO" id="GO:0005929">
    <property type="term" value="C:cilium"/>
    <property type="evidence" value="ECO:0000314"/>
    <property type="project" value="MGI"/>
</dbReference>
<dbReference type="GO" id="GO:0005737">
    <property type="term" value="C:cytoplasm"/>
    <property type="evidence" value="ECO:0000314"/>
    <property type="project" value="MGI"/>
</dbReference>
<dbReference type="GO" id="GO:0005829">
    <property type="term" value="C:cytosol"/>
    <property type="evidence" value="ECO:0000314"/>
    <property type="project" value="HPA"/>
</dbReference>
<dbReference type="GO" id="GO:0016607">
    <property type="term" value="C:nuclear speck"/>
    <property type="evidence" value="ECO:0000314"/>
    <property type="project" value="HPA"/>
</dbReference>
<dbReference type="GO" id="GO:0032391">
    <property type="term" value="C:photoreceptor connecting cilium"/>
    <property type="evidence" value="ECO:0000318"/>
    <property type="project" value="GO_Central"/>
</dbReference>
<dbReference type="GO" id="GO:0005886">
    <property type="term" value="C:plasma membrane"/>
    <property type="evidence" value="ECO:0000314"/>
    <property type="project" value="HPA"/>
</dbReference>
<dbReference type="GO" id="GO:0031870">
    <property type="term" value="F:thromboxane A2 receptor binding"/>
    <property type="evidence" value="ECO:0000353"/>
    <property type="project" value="UniProtKB"/>
</dbReference>
<dbReference type="GO" id="GO:0043010">
    <property type="term" value="P:camera-type eye development"/>
    <property type="evidence" value="ECO:0007669"/>
    <property type="project" value="Ensembl"/>
</dbReference>
<dbReference type="GO" id="GO:0021549">
    <property type="term" value="P:cerebellum development"/>
    <property type="evidence" value="ECO:0007669"/>
    <property type="project" value="Ensembl"/>
</dbReference>
<dbReference type="GO" id="GO:0090102">
    <property type="term" value="P:cochlea development"/>
    <property type="evidence" value="ECO:0007669"/>
    <property type="project" value="Ensembl"/>
</dbReference>
<dbReference type="GO" id="GO:0022038">
    <property type="term" value="P:corpus callosum development"/>
    <property type="evidence" value="ECO:0007669"/>
    <property type="project" value="Ensembl"/>
</dbReference>
<dbReference type="GO" id="GO:0007368">
    <property type="term" value="P:determination of left/right symmetry"/>
    <property type="evidence" value="ECO:0007669"/>
    <property type="project" value="Ensembl"/>
</dbReference>
<dbReference type="GO" id="GO:0035115">
    <property type="term" value="P:embryonic forelimb morphogenesis"/>
    <property type="evidence" value="ECO:0007669"/>
    <property type="project" value="Ensembl"/>
</dbReference>
<dbReference type="GO" id="GO:0035116">
    <property type="term" value="P:embryonic hindlimb morphogenesis"/>
    <property type="evidence" value="ECO:0007669"/>
    <property type="project" value="Ensembl"/>
</dbReference>
<dbReference type="GO" id="GO:0001736">
    <property type="term" value="P:establishment of planar polarity"/>
    <property type="evidence" value="ECO:0007669"/>
    <property type="project" value="Ensembl"/>
</dbReference>
<dbReference type="GO" id="GO:0007163">
    <property type="term" value="P:establishment or maintenance of cell polarity"/>
    <property type="evidence" value="ECO:0007669"/>
    <property type="project" value="Ensembl"/>
</dbReference>
<dbReference type="GO" id="GO:0001701">
    <property type="term" value="P:in utero embryonic development"/>
    <property type="evidence" value="ECO:0007669"/>
    <property type="project" value="Ensembl"/>
</dbReference>
<dbReference type="GO" id="GO:0001822">
    <property type="term" value="P:kidney development"/>
    <property type="evidence" value="ECO:0007669"/>
    <property type="project" value="Ensembl"/>
</dbReference>
<dbReference type="GO" id="GO:0021670">
    <property type="term" value="P:lateral ventricle development"/>
    <property type="evidence" value="ECO:0007669"/>
    <property type="project" value="Ensembl"/>
</dbReference>
<dbReference type="GO" id="GO:0001889">
    <property type="term" value="P:liver development"/>
    <property type="evidence" value="ECO:0007669"/>
    <property type="project" value="Ensembl"/>
</dbReference>
<dbReference type="GO" id="GO:0045744">
    <property type="term" value="P:negative regulation of G protein-coupled receptor signaling pathway"/>
    <property type="evidence" value="ECO:0000314"/>
    <property type="project" value="UniProtKB"/>
</dbReference>
<dbReference type="GO" id="GO:0021532">
    <property type="term" value="P:neural tube patterning"/>
    <property type="evidence" value="ECO:0007669"/>
    <property type="project" value="Ensembl"/>
</dbReference>
<dbReference type="GO" id="GO:1905515">
    <property type="term" value="P:non-motile cilium assembly"/>
    <property type="evidence" value="ECO:0000318"/>
    <property type="project" value="GO_Central"/>
</dbReference>
<dbReference type="GO" id="GO:0043584">
    <property type="term" value="P:nose development"/>
    <property type="evidence" value="ECO:0007669"/>
    <property type="project" value="Ensembl"/>
</dbReference>
<dbReference type="GO" id="GO:0021772">
    <property type="term" value="P:olfactory bulb development"/>
    <property type="evidence" value="ECO:0007669"/>
    <property type="project" value="Ensembl"/>
</dbReference>
<dbReference type="GO" id="GO:0060039">
    <property type="term" value="P:pericardium development"/>
    <property type="evidence" value="ECO:0007669"/>
    <property type="project" value="Ensembl"/>
</dbReference>
<dbReference type="GO" id="GO:0008589">
    <property type="term" value="P:regulation of smoothened signaling pathway"/>
    <property type="evidence" value="ECO:0007669"/>
    <property type="project" value="Ensembl"/>
</dbReference>
<dbReference type="CDD" id="cd00030">
    <property type="entry name" value="C2"/>
    <property type="match status" value="1"/>
</dbReference>
<dbReference type="FunFam" id="2.60.40.150:FF:000196">
    <property type="entry name" value="Protein fantom"/>
    <property type="match status" value="1"/>
</dbReference>
<dbReference type="FunFam" id="2.60.40.150:FF:000073">
    <property type="entry name" value="protein fantom isoform X1"/>
    <property type="match status" value="1"/>
</dbReference>
<dbReference type="FunFam" id="2.60.40.150:FF:000075">
    <property type="entry name" value="protein fantom isoform X1"/>
    <property type="match status" value="1"/>
</dbReference>
<dbReference type="Gene3D" id="2.60.40.150">
    <property type="entry name" value="C2 domain"/>
    <property type="match status" value="3"/>
</dbReference>
<dbReference type="InterPro" id="IPR021656">
    <property type="entry name" value="C2-C2_1"/>
</dbReference>
<dbReference type="InterPro" id="IPR000008">
    <property type="entry name" value="C2_dom"/>
</dbReference>
<dbReference type="InterPro" id="IPR035892">
    <property type="entry name" value="C2_domain_sf"/>
</dbReference>
<dbReference type="InterPro" id="IPR041091">
    <property type="entry name" value="RPGRIP1_C"/>
</dbReference>
<dbReference type="InterPro" id="IPR031139">
    <property type="entry name" value="RPGRIP1_fam"/>
</dbReference>
<dbReference type="PANTHER" id="PTHR14240:SF4">
    <property type="entry name" value="PROTEIN FANTOM"/>
    <property type="match status" value="1"/>
</dbReference>
<dbReference type="PANTHER" id="PTHR14240">
    <property type="entry name" value="RETINITIS PIGMENTOSA GTPASE REGULATOR-INTERACTING PROTEIN"/>
    <property type="match status" value="1"/>
</dbReference>
<dbReference type="Pfam" id="PF00168">
    <property type="entry name" value="C2"/>
    <property type="match status" value="1"/>
</dbReference>
<dbReference type="Pfam" id="PF11618">
    <property type="entry name" value="C2-C2_1"/>
    <property type="match status" value="1"/>
</dbReference>
<dbReference type="Pfam" id="PF18111">
    <property type="entry name" value="RPGR1_C"/>
    <property type="match status" value="1"/>
</dbReference>
<dbReference type="SMART" id="SM00239">
    <property type="entry name" value="C2"/>
    <property type="match status" value="2"/>
</dbReference>
<dbReference type="SUPFAM" id="SSF49562">
    <property type="entry name" value="C2 domain (Calcium/lipid-binding domain, CaLB)"/>
    <property type="match status" value="2"/>
</dbReference>
<dbReference type="PROSITE" id="PS50004">
    <property type="entry name" value="C2"/>
    <property type="match status" value="2"/>
</dbReference>
<gene>
    <name type="primary">RPGRIP1L</name>
    <name type="synonym">FTM</name>
    <name type="synonym">KIAA1005</name>
    <name type="synonym">NPHP8</name>
</gene>
<name>FTM_HUMAN</name>
<protein>
    <recommendedName>
        <fullName>Protein fantom</fullName>
    </recommendedName>
    <alternativeName>
        <fullName>Nephrocystin-8</fullName>
    </alternativeName>
    <alternativeName>
        <fullName>RPGR-interacting protein 1-like protein</fullName>
        <shortName>RPGRIP1-like protein</shortName>
    </alternativeName>
</protein>
<comment type="function">
    <text evidence="1 10">Negatively regulates signaling through the G-protein coupled thromboxane A2 receptor (TBXA2R) (PubMed:19464661). May be involved in mechanisms like programmed cell death, craniofacial development, patterning of the limbs, and formation of the left-right axis (By similarity). Involved in the organization of apical junctions; the function is proposed to implicate a NPHP1-4-8 module. Does not seem to be strictly required for ciliogenesis (PubMed:19464661). Involved in establishment of planar cell polarity such as in cochlear sensory epithelium and is proposed to implicate stabilization of disheveled proteins (By similarity). Involved in regulation of proteasomal activity at the primary cilium probably implicating association with PSDM2 (By similarity).</text>
</comment>
<comment type="subunit">
    <text evidence="1 6 9 10 15">Interacts with NPHP4 and NPHP1; NPHP1, NPHP4 and RPGRIP1L are proposed to form a functional NPHP1-4-8 module localized to cell-cell contacts and the ciliary transition zone; NPHP4 mediates the interaction between NPHP1 and RPGRIP1L. Interacts with IQCB1; the interaction likely requires additional interactors (By similarity). Interacts with TBXA2R (via C-terminus). Interacts with RPGR. Interacts with NEK4. Interacts with NPHP4, INVS and DVL2; the complex is proposed to be involved in DVL2 stabilization.</text>
</comment>
<comment type="interaction">
    <interactant intactId="EBI-5235485">
        <id>Q68CZ1</id>
    </interactant>
    <interactant intactId="EBI-6915619">
        <id>Q9R0X5</id>
        <label>Rpgr</label>
    </interactant>
    <organismsDiffer>true</organismsDiffer>
    <experiments>3</experiments>
</comment>
<comment type="interaction">
    <interactant intactId="EBI-9356215">
        <id>Q68CZ1-2</id>
    </interactant>
    <interactant intactId="EBI-4281852">
        <id>O75161</id>
        <label>NPHP4</label>
    </interactant>
    <organismsDiffer>false</organismsDiffer>
    <experiments>8</experiments>
</comment>
<comment type="subcellular location">
    <subcellularLocation>
        <location>Cytoplasm</location>
    </subcellularLocation>
    <subcellularLocation>
        <location evidence="1 13">Cytoplasm</location>
        <location evidence="1 13">Cytoskeleton</location>
        <location evidence="1 13">Cilium basal body</location>
    </subcellularLocation>
    <subcellularLocation>
        <location>Cytoplasm</location>
        <location>Cytoskeleton</location>
        <location>Cilium axoneme</location>
    </subcellularLocation>
    <subcellularLocation>
        <location evidence="1">Cytoplasm</location>
        <location evidence="1">Cytoskeleton</location>
        <location evidence="1">Microtubule organizing center</location>
        <location evidence="1">Centrosome</location>
    </subcellularLocation>
    <subcellularLocation>
        <location evidence="1">Cell junction</location>
        <location evidence="1">Tight junction</location>
    </subcellularLocation>
    <text evidence="1">In cultured renal cells, it localizes diffusely in the cytoplasm but, as cells approach confluence, it accumulates to basolateral tight junctions. Localizes to the ciliary transition zone.</text>
</comment>
<comment type="alternative products">
    <event type="alternative splicing"/>
    <isoform>
        <id>Q68CZ1-1</id>
        <name>1</name>
        <sequence type="displayed"/>
    </isoform>
    <isoform>
        <id>Q68CZ1-2</id>
        <name>2</name>
        <sequence type="described" ref="VSP_026161 VSP_026162"/>
    </isoform>
</comment>
<comment type="tissue specificity">
    <text evidence="5 6 7 10">Ubiquitously expressed with relatively high level of expression in hypothalamus and islet. During early development, expressed in multiple organs including brain, eye, forelimb and kidney.</text>
</comment>
<comment type="disease">
    <text evidence="9 12">Ciliary dysfunction leads to a broad spectrum of disorders, collectively termed ciliopathies. Overlapping clinical features include retinal degeneration, renal cystic disease, skeletal abnormalities, fibrosis of various organ, and a complex range of anatomical and functional defects of the central and peripheral nervous system. The ciliopathy range of diseases includes Meckel-Gruber syndrome, Bardet-Biedl syndrome, Joubert syndrome, nephronophtisis, Senior-Loken syndrome, and Jeune asphyxiating thoracic dystrophy among others. Single-locus allelism is insufficient to explain the variable penetrance and expressivity of such disorders, leading to the suggestion that variations across multiple sites of the ciliary proteome, including RPGRIP1L, influence the clinical outcome.</text>
</comment>
<comment type="disease" evidence="6 7 8 14">
    <disease id="DI-00610">
        <name>Joubert syndrome 7</name>
        <acronym>JBTS7</acronym>
        <description>A disorder presenting with cerebellar ataxia, oculomotor apraxia, hypotonia, neonatal breathing abnormalities and psychomotor delay. Neuroradiologically, it is characterized by cerebellar vermian hypoplasia/aplasia, thickened and reoriented superior cerebellar peduncles, and an abnormally large interpeduncular fossa, giving the appearance of a molar tooth on transaxial slices (molar tooth sign). Additional variable features include retinal dystrophy and renal disease.</description>
        <dbReference type="MIM" id="611560"/>
    </disease>
    <text>The disease is caused by variants affecting the gene represented in this entry.</text>
</comment>
<comment type="disease" evidence="7 9">
    <disease id="DI-00703">
        <name>Meckel syndrome 5</name>
        <acronym>MKS5</acronym>
        <description>A disorder characterized by a combination of renal cysts and variably associated features including developmental anomalies of the central nervous system (typically encephalocele), hepatic ductal dysplasia and cysts, and polydactyly.</description>
        <dbReference type="MIM" id="611561"/>
    </disease>
    <text>The disease is caused by variants affecting the gene represented in this entry.</text>
</comment>
<comment type="disease" evidence="11">
    <disease id="DI-05979">
        <name>COACH syndrome 3</name>
        <acronym>COACH3</acronym>
        <description>A form of COACH syndrome, a disorder characterized by cerebellar vermis hypoplasia, developmental delay, impaired intellectual development, ataxia, and hepatic fibrosis. Patients present the molar tooth sign, a midbrain-hindbrain malformation pathognomonic for Joubert syndrome and related disorders. Other features, such as coloboma and renal cysts, may be variable. COACH3 inheritance is autosomal recessive.</description>
        <dbReference type="MIM" id="619113"/>
    </disease>
    <text>The disease is caused by variants affecting the gene represented in this entry.</text>
</comment>
<comment type="similarity">
    <text evidence="17">Belongs to the RPGRIP1 family.</text>
</comment>
<comment type="online information" name="RPGRIP1-like (RPGRIP1L)">
    <link uri="https://databases.lovd.nl/shared/genes/RPGRIP1L"/>
    <text>Leiden Open Variation Database (LOVD)</text>
</comment>
<keyword id="KW-0002">3D-structure</keyword>
<keyword id="KW-0025">Alternative splicing</keyword>
<keyword id="KW-0965">Cell junction</keyword>
<keyword id="KW-0966">Cell projection</keyword>
<keyword id="KW-1186">Ciliopathy</keyword>
<keyword id="KW-0969">Cilium</keyword>
<keyword id="KW-0175">Coiled coil</keyword>
<keyword id="KW-0963">Cytoplasm</keyword>
<keyword id="KW-0206">Cytoskeleton</keyword>
<keyword id="KW-0225">Disease variant</keyword>
<keyword id="KW-0979">Joubert syndrome</keyword>
<keyword id="KW-0981">Meckel syndrome</keyword>
<keyword id="KW-1267">Proteomics identification</keyword>
<keyword id="KW-1185">Reference proteome</keyword>
<keyword id="KW-0677">Repeat</keyword>
<keyword id="KW-0796">Tight junction</keyword>
<reference key="1">
    <citation type="journal article" date="2007" name="BMC Genomics">
        <title>The full-ORF clone resource of the German cDNA consortium.</title>
        <authorList>
            <person name="Bechtel S."/>
            <person name="Rosenfelder H."/>
            <person name="Duda A."/>
            <person name="Schmidt C.P."/>
            <person name="Ernst U."/>
            <person name="Wellenreuther R."/>
            <person name="Mehrle A."/>
            <person name="Schuster C."/>
            <person name="Bahr A."/>
            <person name="Bloecker H."/>
            <person name="Heubner D."/>
            <person name="Hoerlein A."/>
            <person name="Michel G."/>
            <person name="Wedler H."/>
            <person name="Koehrer K."/>
            <person name="Ottenwaelder B."/>
            <person name="Poustka A."/>
            <person name="Wiemann S."/>
            <person name="Schupp I."/>
        </authorList>
    </citation>
    <scope>NUCLEOTIDE SEQUENCE [LARGE SCALE MRNA] (ISOFORM 1)</scope>
    <source>
        <tissue>Endometrial adenocarcinoma</tissue>
    </source>
</reference>
<reference key="2">
    <citation type="journal article" date="2004" name="Nature">
        <title>The sequence and analysis of duplication-rich human chromosome 16.</title>
        <authorList>
            <person name="Martin J."/>
            <person name="Han C."/>
            <person name="Gordon L.A."/>
            <person name="Terry A."/>
            <person name="Prabhakar S."/>
            <person name="She X."/>
            <person name="Xie G."/>
            <person name="Hellsten U."/>
            <person name="Chan Y.M."/>
            <person name="Altherr M."/>
            <person name="Couronne O."/>
            <person name="Aerts A."/>
            <person name="Bajorek E."/>
            <person name="Black S."/>
            <person name="Blumer H."/>
            <person name="Branscomb E."/>
            <person name="Brown N.C."/>
            <person name="Bruno W.J."/>
            <person name="Buckingham J.M."/>
            <person name="Callen D.F."/>
            <person name="Campbell C.S."/>
            <person name="Campbell M.L."/>
            <person name="Campbell E.W."/>
            <person name="Caoile C."/>
            <person name="Challacombe J.F."/>
            <person name="Chasteen L.A."/>
            <person name="Chertkov O."/>
            <person name="Chi H.C."/>
            <person name="Christensen M."/>
            <person name="Clark L.M."/>
            <person name="Cohn J.D."/>
            <person name="Denys M."/>
            <person name="Detter J.C."/>
            <person name="Dickson M."/>
            <person name="Dimitrijevic-Bussod M."/>
            <person name="Escobar J."/>
            <person name="Fawcett J.J."/>
            <person name="Flowers D."/>
            <person name="Fotopulos D."/>
            <person name="Glavina T."/>
            <person name="Gomez M."/>
            <person name="Gonzales E."/>
            <person name="Goodstein D."/>
            <person name="Goodwin L.A."/>
            <person name="Grady D.L."/>
            <person name="Grigoriev I."/>
            <person name="Groza M."/>
            <person name="Hammon N."/>
            <person name="Hawkins T."/>
            <person name="Haydu L."/>
            <person name="Hildebrand C.E."/>
            <person name="Huang W."/>
            <person name="Israni S."/>
            <person name="Jett J."/>
            <person name="Jewett P.B."/>
            <person name="Kadner K."/>
            <person name="Kimball H."/>
            <person name="Kobayashi A."/>
            <person name="Krawczyk M.-C."/>
            <person name="Leyba T."/>
            <person name="Longmire J.L."/>
            <person name="Lopez F."/>
            <person name="Lou Y."/>
            <person name="Lowry S."/>
            <person name="Ludeman T."/>
            <person name="Manohar C.F."/>
            <person name="Mark G.A."/>
            <person name="McMurray K.L."/>
            <person name="Meincke L.J."/>
            <person name="Morgan J."/>
            <person name="Moyzis R.K."/>
            <person name="Mundt M.O."/>
            <person name="Munk A.C."/>
            <person name="Nandkeshwar R.D."/>
            <person name="Pitluck S."/>
            <person name="Pollard M."/>
            <person name="Predki P."/>
            <person name="Parson-Quintana B."/>
            <person name="Ramirez L."/>
            <person name="Rash S."/>
            <person name="Retterer J."/>
            <person name="Ricke D.O."/>
            <person name="Robinson D.L."/>
            <person name="Rodriguez A."/>
            <person name="Salamov A."/>
            <person name="Saunders E.H."/>
            <person name="Scott D."/>
            <person name="Shough T."/>
            <person name="Stallings R.L."/>
            <person name="Stalvey M."/>
            <person name="Sutherland R.D."/>
            <person name="Tapia R."/>
            <person name="Tesmer J.G."/>
            <person name="Thayer N."/>
            <person name="Thompson L.S."/>
            <person name="Tice H."/>
            <person name="Torney D.C."/>
            <person name="Tran-Gyamfi M."/>
            <person name="Tsai M."/>
            <person name="Ulanovsky L.E."/>
            <person name="Ustaszewska A."/>
            <person name="Vo N."/>
            <person name="White P.S."/>
            <person name="Williams A.L."/>
            <person name="Wills P.L."/>
            <person name="Wu J.-R."/>
            <person name="Wu K."/>
            <person name="Yang J."/>
            <person name="DeJong P."/>
            <person name="Bruce D."/>
            <person name="Doggett N.A."/>
            <person name="Deaven L."/>
            <person name="Schmutz J."/>
            <person name="Grimwood J."/>
            <person name="Richardson P."/>
            <person name="Rokhsar D.S."/>
            <person name="Eichler E.E."/>
            <person name="Gilna P."/>
            <person name="Lucas S.M."/>
            <person name="Myers R.M."/>
            <person name="Rubin E.M."/>
            <person name="Pennacchio L.A."/>
        </authorList>
    </citation>
    <scope>NUCLEOTIDE SEQUENCE [LARGE SCALE GENOMIC DNA]</scope>
</reference>
<reference key="3">
    <citation type="journal article" date="2004" name="Genome Res.">
        <title>The status, quality, and expansion of the NIH full-length cDNA project: the Mammalian Gene Collection (MGC).</title>
        <authorList>
            <consortium name="The MGC Project Team"/>
        </authorList>
    </citation>
    <scope>NUCLEOTIDE SEQUENCE [LARGE SCALE MRNA] OF 1-351 (ISOFORMS 1/2)</scope>
    <source>
        <tissue>Testis</tissue>
    </source>
</reference>
<reference key="4">
    <citation type="journal article" date="1999" name="DNA Res.">
        <title>Prediction of the coding sequences of unidentified human genes. XIII. The complete sequences of 100 new cDNA clones from brain which code for large proteins in vitro.</title>
        <authorList>
            <person name="Nagase T."/>
            <person name="Ishikawa K."/>
            <person name="Suyama M."/>
            <person name="Kikuno R."/>
            <person name="Hirosawa M."/>
            <person name="Miyajima N."/>
            <person name="Tanaka A."/>
            <person name="Kotani H."/>
            <person name="Nomura N."/>
            <person name="Ohara O."/>
        </authorList>
    </citation>
    <scope>NUCLEOTIDE SEQUENCE [LARGE SCALE MRNA] OF 181-1315 (ISOFORM 2)</scope>
    <source>
        <tissue>Brain</tissue>
    </source>
</reference>
<reference key="5">
    <citation type="journal article" date="2007" name="Nat. Genet.">
        <title>The ciliary gene RPGRIP1L is mutated in cerebello-oculo-renal syndrome (Joubert syndrome type B) and Meckel syndrome.</title>
        <authorList>
            <person name="Delous M."/>
            <person name="Baala L."/>
            <person name="Salomon R."/>
            <person name="Laclef C."/>
            <person name="Vierkotten J."/>
            <person name="Tory K."/>
            <person name="Golzio C."/>
            <person name="Lacoste T."/>
            <person name="Besse L."/>
            <person name="Ozilou C."/>
            <person name="Moutkine I."/>
            <person name="Hellman N.E."/>
            <person name="Anselme I."/>
            <person name="Silbermann F."/>
            <person name="Vesque C."/>
            <person name="Gerhardt C."/>
            <person name="Rattenberry E."/>
            <person name="Wolf M.T.F."/>
            <person name="Gubler M.C."/>
            <person name="Martinovic J."/>
            <person name="Encha-Razavi F."/>
            <person name="Boddaert N."/>
            <person name="Gonzales M."/>
            <person name="Macher M.A."/>
            <person name="Nivet H."/>
            <person name="Champion G."/>
            <person name="Bertheleme J.P."/>
            <person name="Niaudet P."/>
            <person name="McDonald F."/>
            <person name="Hildebrandt F."/>
            <person name="Johnson C.A."/>
            <person name="Vekemans M."/>
            <person name="Antignac C."/>
            <person name="Ruether U."/>
            <person name="Schneider-Maunoury S."/>
            <person name="Attie-Bitach T."/>
            <person name="Saunier S."/>
        </authorList>
    </citation>
    <scope>TISSUE SPECIFICITY</scope>
    <scope>SUBCELLULAR LOCATION</scope>
    <scope>INVOLVEMENT IN MKS5</scope>
    <scope>VARIANTS JBTS7 PRO-615; ILE-677 AND PRO-695</scope>
    <scope>CHARACTERIZATION OF VARIANTS JBTS7 PRO-615; ILE-677 AND PRO-695</scope>
</reference>
<reference key="6">
    <citation type="journal article" date="2007" name="Nat. Genet.">
        <title>Mutations in the gene encoding the basal body protein RPGRIP1L, a nephrocystin-4 interactor, cause Joubert syndrome.</title>
        <authorList>
            <person name="Arts H.H."/>
            <person name="Doherty D."/>
            <person name="van Beersum S.E.C."/>
            <person name="Parisi M.A."/>
            <person name="Letteboer S.J.F."/>
            <person name="Gorden N.T."/>
            <person name="Peters T.A."/>
            <person name="Maerker T."/>
            <person name="Voesenek K."/>
            <person name="Kartono A."/>
            <person name="Ozyurek H."/>
            <person name="Farin F.M."/>
            <person name="Kroes H.Y."/>
            <person name="Wolfrum U."/>
            <person name="Brunner H.G."/>
            <person name="Cremers F.P.M."/>
            <person name="Glass I.A."/>
            <person name="Knoers N.V.A.M."/>
            <person name="Roepman R."/>
        </authorList>
    </citation>
    <scope>INTERACTION WITH NPHP4</scope>
    <scope>TISSUE SPECIFICITY</scope>
    <scope>SUBCELLULAR LOCATION</scope>
    <scope>VARIANT JBTS7 PRO-615</scope>
    <scope>CHARACTERIZATION OF VARIANT JBTS7 PRO-615</scope>
</reference>
<reference key="7">
    <citation type="journal article" date="2007" name="Science">
        <title>A common variant in the FTO gene is associated with body mass index and predisposes to childhood and adult obesity.</title>
        <authorList>
            <person name="Frayling T.M."/>
            <person name="Timpson N.J."/>
            <person name="Weedon M.N."/>
            <person name="Zeggini E."/>
            <person name="Freathy R.M."/>
            <person name="Lindgren C.M."/>
            <person name="Perry J.R."/>
            <person name="Elliott K.S."/>
            <person name="Lango H."/>
            <person name="Rayner N.W."/>
            <person name="Shields B."/>
            <person name="Harries L.W."/>
            <person name="Barrett J.C."/>
            <person name="Ellard S."/>
            <person name="Groves C.J."/>
            <person name="Knight B."/>
            <person name="Patch A.M."/>
            <person name="Ness A.R."/>
            <person name="Ebrahim S."/>
            <person name="Lawlor D.A."/>
            <person name="Ring S.M."/>
            <person name="Ben-Shlomo Y."/>
            <person name="Jarvelin M.-R."/>
            <person name="Sovio U."/>
            <person name="Bennett A.J."/>
            <person name="Melzer D."/>
            <person name="Ferrucci L."/>
            <person name="Loos R.J."/>
            <person name="Barroso I."/>
            <person name="Wareham N.J."/>
            <person name="Karpe F."/>
            <person name="Owen K.R."/>
            <person name="Cardon L.R."/>
            <person name="Walker M."/>
            <person name="Hitman G.A."/>
            <person name="Palmer C.N."/>
            <person name="Doney A.S."/>
            <person name="Morris A.D."/>
            <person name="Davey-Smith G."/>
            <person name="Hattersley A.T."/>
            <person name="McCarthy M.I."/>
        </authorList>
    </citation>
    <scope>TISSUE SPECIFICITY</scope>
</reference>
<reference key="8">
    <citation type="journal article" date="2009" name="Nat. Genet.">
        <title>A common allele in RPGRIP1L is a modifier of retinal degeneration in ciliopathies.</title>
        <authorList>
            <person name="Khanna H."/>
            <person name="Davis E.E."/>
            <person name="Murga-Zamalloa C.A."/>
            <person name="Estrada-Cuzcano A."/>
            <person name="Lopez I."/>
            <person name="den Hollander A.I."/>
            <person name="Zonneveld M.N."/>
            <person name="Othman M.I."/>
            <person name="Waseem N."/>
            <person name="Chakarova C.F."/>
            <person name="Maubaret C."/>
            <person name="Diaz-Font A."/>
            <person name="MacDonald I."/>
            <person name="Muzny D.M."/>
            <person name="Wheeler D.A."/>
            <person name="Morgan M."/>
            <person name="Lewis L.R."/>
            <person name="Logan C.V."/>
            <person name="Tan P.L."/>
            <person name="Beer M.A."/>
            <person name="Inglehearn C.F."/>
            <person name="Lewis R.A."/>
            <person name="Jacobson S.G."/>
            <person name="Bergmann C."/>
            <person name="Beales P.L."/>
            <person name="Attie-Bitach T."/>
            <person name="Johnson C.A."/>
            <person name="Otto E.A."/>
            <person name="Bhattacharya S.S."/>
            <person name="Hildebrandt F."/>
            <person name="Gibbs R.A."/>
            <person name="Koenekoop R.K."/>
            <person name="Swaroop A."/>
            <person name="Katsanis N."/>
        </authorList>
    </citation>
    <scope>INTERACTION WITH RPGR</scope>
    <scope>VARIANTS GLY-199; THR-229; SER-447; PHE-546; ILE-647; ILE-677; LEU-937; SER-1025; GLY-1183; ASN-1264 AND TYR-1264</scope>
    <scope>VARIANT MKS5 CYS-1236</scope>
    <scope>CHARACTERIZATION OF VARIANT THR-229</scope>
    <scope>ASSOCIATION OF VARIANT THR-229 WITH RETINAL DEGENERATION IN CILIOPATHIES</scope>
</reference>
<reference key="9">
    <citation type="journal article" date="2009" name="Prostaglandins Other Lipid Mediat.">
        <title>Thromboxane A2-induced signal transduction is negatively regulated by KIAA1005 that directly interacts with thromboxane A2 receptor.</title>
        <authorList>
            <person name="Tokue S."/>
            <person name="Sasaki M."/>
            <person name="Nakahata N."/>
        </authorList>
    </citation>
    <scope>FUNCTION</scope>
    <scope>INTERACTION WITH TBXA2R</scope>
    <scope>TISSUE SPECIFICITY</scope>
</reference>
<reference key="10">
    <citation type="journal article" date="2011" name="Cell">
        <title>Mapping the NPHP-JBTS-MKS protein network reveals ciliopathy disease genes and pathways.</title>
        <authorList>
            <person name="Sang L."/>
            <person name="Miller J.J."/>
            <person name="Corbit K.C."/>
            <person name="Giles R.H."/>
            <person name="Brauer M.J."/>
            <person name="Otto E.A."/>
            <person name="Baye L.M."/>
            <person name="Wen X."/>
            <person name="Scales S.J."/>
            <person name="Kwong M."/>
            <person name="Huntzicker E.G."/>
            <person name="Sfakianos M.K."/>
            <person name="Sandoval W."/>
            <person name="Bazan J.F."/>
            <person name="Kulkarni P."/>
            <person name="Garcia-Gonzalo F.R."/>
            <person name="Seol A.D."/>
            <person name="O'Toole J.F."/>
            <person name="Held S."/>
            <person name="Reutter H.M."/>
            <person name="Lane W.S."/>
            <person name="Rafiq M.A."/>
            <person name="Noor A."/>
            <person name="Ansar M."/>
            <person name="Devi A.R."/>
            <person name="Sheffield V.C."/>
            <person name="Slusarski D.C."/>
            <person name="Vincent J.B."/>
            <person name="Doherty D.A."/>
            <person name="Hildebrandt F."/>
            <person name="Reiter J.F."/>
            <person name="Jackson P.K."/>
        </authorList>
    </citation>
    <scope>FUNCTION</scope>
</reference>
<reference key="11">
    <citation type="journal article" date="2011" name="Hum. Mol. Genet.">
        <title>The ciliopathy-associated protein homologs RPGRIP1 and RPGRIP1L are linked to cilium integrity through interaction with Nek4 serine/threonine kinase.</title>
        <authorList>
            <person name="Coene K.L."/>
            <person name="Mans D.A."/>
            <person name="Boldt K."/>
            <person name="Gloeckner C.J."/>
            <person name="van Reeuwijk J."/>
            <person name="Bolat E."/>
            <person name="Roosing S."/>
            <person name="Letteboer S.J."/>
            <person name="Peters T.A."/>
            <person name="Cremers F.P."/>
            <person name="Ueffing M."/>
            <person name="Roepman R."/>
        </authorList>
    </citation>
    <scope>SUBCELLULAR LOCATION</scope>
    <scope>INTERACTION WITH RPGR AND NEK4</scope>
</reference>
<reference key="12">
    <citation type="journal article" date="2011" name="Nat. Genet.">
        <title>TTC21B contributes both causal and modifying alleles across the ciliopathy spectrum.</title>
        <authorList>
            <person name="Davis E.E."/>
            <person name="Zhang Q."/>
            <person name="Liu Q."/>
            <person name="Diplas B.H."/>
            <person name="Davey L.M."/>
            <person name="Hartley J."/>
            <person name="Stoetzel C."/>
            <person name="Szymanska K."/>
            <person name="Ramaswami G."/>
            <person name="Logan C.V."/>
            <person name="Muzny D.M."/>
            <person name="Young A.C."/>
            <person name="Wheeler D.A."/>
            <person name="Cruz P."/>
            <person name="Morgan M."/>
            <person name="Lewis L.R."/>
            <person name="Cherukuri P."/>
            <person name="Maskeri B."/>
            <person name="Hansen N.F."/>
            <person name="Mullikin J.C."/>
            <person name="Blakesley R.W."/>
            <person name="Bouffard G.G."/>
            <person name="Gyapay G."/>
            <person name="Rieger S."/>
            <person name="Tonshoff B."/>
            <person name="Kern I."/>
            <person name="Soliman N.A."/>
            <person name="Neuhaus T.J."/>
            <person name="Swoboda K.J."/>
            <person name="Kayserili H."/>
            <person name="Gallagher T.E."/>
            <person name="Lewis R.A."/>
            <person name="Bergmann C."/>
            <person name="Otto E.A."/>
            <person name="Saunier S."/>
            <person name="Scambler P.J."/>
            <person name="Beales P.L."/>
            <person name="Gleeson J.G."/>
            <person name="Maher E.R."/>
            <person name="Attie-Bitach T."/>
            <person name="Dollfus H."/>
            <person name="Johnson C.A."/>
            <person name="Green E.D."/>
            <person name="Gibbs R.A."/>
            <person name="Hildebrandt F."/>
            <person name="Pierce E.A."/>
            <person name="Katsanis N."/>
        </authorList>
    </citation>
    <scope>INVOLVEMENT IN CILIOPATHIES</scope>
    <scope>VARIANT GLY-1183</scope>
</reference>
<reference key="13">
    <citation type="journal article" date="2012" name="J. Cell Biol.">
        <title>Dishevelled stabilization by the ciliopathy protein Rpgrip1l is essential for planar cell polarity.</title>
        <authorList>
            <person name="Mahuzier A."/>
            <person name="Gaude H.M."/>
            <person name="Grampa V."/>
            <person name="Anselme I."/>
            <person name="Silbermann F."/>
            <person name="Leroux-Berger M."/>
            <person name="Delacour D."/>
            <person name="Ezan J."/>
            <person name="Montcouquiol M."/>
            <person name="Saunier S."/>
            <person name="Schneider-Maunoury S."/>
            <person name="Vesque C."/>
        </authorList>
    </citation>
    <scope>INTERACTION WITH INVS; NPHP4 AND DVL2</scope>
</reference>
<reference key="14">
    <citation type="submission" date="2007-10" db="PDB data bank">
        <title>Solution structure of the first C2 domain from human KIAA1005 protein.</title>
        <authorList>
            <consortium name="RIKEN structural genomics initiative (RSGI)"/>
        </authorList>
    </citation>
    <scope>STRUCTURE BY NMR OF 595-737</scope>
</reference>
<reference key="15">
    <citation type="journal article" date="2007" name="Kidney Int.">
        <title>Mutational analysis of the RPGRIP1L gene in patients with Joubert syndrome and nephronophthisis.</title>
        <authorList>
            <person name="Wolf M.T."/>
            <person name="Saunier S."/>
            <person name="O'Toole J.F."/>
            <person name="Wanner N."/>
            <person name="Groshong T."/>
            <person name="Attanasio M."/>
            <person name="Salomon R."/>
            <person name="Stallmach T."/>
            <person name="Sayer J.A."/>
            <person name="Waldherr R."/>
            <person name="Griebel M."/>
            <person name="Oh J."/>
            <person name="Neuhaus T.J."/>
            <person name="Josefiak U."/>
            <person name="Antignac C."/>
            <person name="Otto E.A."/>
            <person name="Hildebrandt F."/>
        </authorList>
    </citation>
    <scope>VARIANTS JBTS7 LYS-393; PRO-615 AND ARG-633</scope>
</reference>
<reference key="16">
    <citation type="journal article" date="2010" name="J. Med. Genet.">
        <title>Mutations in 3 genes (MKS3, CC2D2A and RPGRIP1L) cause COACH syndrome (Joubert syndrome with congenital hepatic fibrosis).</title>
        <authorList>
            <person name="Doherty D."/>
            <person name="Parisi M.A."/>
            <person name="Finn L.S."/>
            <person name="Gunay-Aygun M."/>
            <person name="Al-Mateen M."/>
            <person name="Bates D."/>
            <person name="Clericuzio C."/>
            <person name="Demir H."/>
            <person name="Dorschner M."/>
            <person name="van Essen A.J."/>
            <person name="Gahl W.A."/>
            <person name="Gentile M."/>
            <person name="Gorden N.T."/>
            <person name="Hikida A."/>
            <person name="Knutzen D."/>
            <person name="Ozyurek H."/>
            <person name="Phelps I."/>
            <person name="Rosenthal P."/>
            <person name="Verloes A."/>
            <person name="Weigand H."/>
            <person name="Chance P.F."/>
            <person name="Dobyns W.B."/>
            <person name="Glass I.A."/>
        </authorList>
    </citation>
    <scope>VARIANT COACH3 PRO-659</scope>
</reference>
<reference key="17">
    <citation type="journal article" date="2012" name="Hum. Mutat.">
        <title>Molecular characterization of Joubert syndrome in Saudi Arabia.</title>
        <authorList>
            <person name="Alazami A.M."/>
            <person name="Alshammari M.J."/>
            <person name="Salih M.A."/>
            <person name="Alzahrani F."/>
            <person name="Hijazi H."/>
            <person name="Seidahmed M.Z."/>
            <person name="Abu Safieh L."/>
            <person name="Aldosary M."/>
            <person name="Khan A.O."/>
            <person name="Alkuraya F.S."/>
        </authorList>
    </citation>
    <scope>VARIANT JBTS7 ARG-550</scope>
</reference>
<sequence>MSGPTDETAGDLPVKDTGLNLFGMGGLQETSTTRTMKSRQAVSRVSREELEDRFLRLHDENILLKQHARKQEDKIKRMATKLIRLVNDKKRYERVGGGPKRLGRDVEMEEMIEQLQEKVHELEKQNETLKNRLISAKQQLQTQGYRQTPYNNVQSRINTGRRKANENAGLQECPRKGIKFQDADVAETPHPMFTKYGNSLLEEARGEIRNLENVIQSQRGQIEELEHLAEILKTQLRRKENEIELSLLQLREQQATDQRSNIRDNVEMIKLHKQLVEKSNALSAMEGKFIQLQEKQRTLRISHDALMANGDELNMQLKEQRLKCCSLEKQLHSMKFSERRIEELQDRINDLEKERELLKENYDKLYDSAFSAAHEEQWKLKEQQLKVQIAQLETALKSDLTDKTEILDRLKTERDQNEKLVQENRELQLQYLEQKQQLDELKKRIKLYNQENDINADELSEALLLIKAQKEQKNGDLSFLVKVDSEINKDLERSMRELQATHAETVQELEKTRNMLIMQHKINKDYQMEVEAVTRKMENLQQDYELKVEQYVHLLDIRAARIHKLEAQLKDIAYGTKQYKFKPEIMPDDSVDEFDETIHLERGENLFEIHINKVTFSSEVLQASGDKEPVTFCTYAFYDFELQTTPVVRGLHPEYNFTSQYLVHVNDLFLQYIQKNTITLEVHQAYSTEYETIAACQLKFHEILEKSGRIFCTASLIGTKGDIPNFGTVEYWFRLRVPMDQAIRLYRERAKALGYITSNFKGPEHMQSLSQQAPKTAQLSSTDSTDGNLNELHITIRCCNHLQSRASHLQPHPYVVYKFFDFADHDTAIIPSSNDPQFDDHMYFPVPMNMDLDRYLKSESLSFYVFDDSDTQENIYIGKVNVPLISLAHDRCISGIFELTDHQKHPAGTIHVILKWKFAYLPPSGSITTEDLGNFIRSEEPEVVQRLPPASSVSTLVLAPRPKPRQRLTPVDKKVSFVDIMPHQSDETSPPPEDRKEISPEVEHIPEIEINMLTVPHVPKVSQEGSVDEVKENTEKMQQGKDDVSLLSEGQLAEQSLASSEDETEITEDLEPEVEEDMSASDSDDCIIPGPISKNIKQSLALSPGLGCSSAISAHCNFRLPGSSDFPASASQVDGITGACHHTQPSEKIRIEIIALSLNDSQVTMDDTIQRLFVECRFYSLPAEETPVSLPKPKSGQWVYYNYSNVIYVDKENNKAKRDILKAILQKQEMPNRSLRFTVVSDPPEDEQDLECEDIGVAHVDLADMFQEGRDLIEQNIDVFDARADGEGIGKLRVTVEALHALQSVYKQYRDDLEA</sequence>
<proteinExistence type="evidence at protein level"/>
<feature type="chain" id="PRO_0000291267" description="Protein fantom">
    <location>
        <begin position="1"/>
        <end position="1315"/>
    </location>
</feature>
<feature type="domain" description="C2 1" evidence="3">
    <location>
        <begin position="577"/>
        <end position="713"/>
    </location>
</feature>
<feature type="domain" description="C2 2" evidence="3">
    <location>
        <begin position="773"/>
        <end position="897"/>
    </location>
</feature>
<feature type="region of interest" description="Disordered" evidence="4">
    <location>
        <begin position="1021"/>
        <end position="1083"/>
    </location>
</feature>
<feature type="coiled-coil region" evidence="2">
    <location>
        <begin position="64"/>
        <end position="144"/>
    </location>
</feature>
<feature type="coiled-coil region" evidence="2">
    <location>
        <begin position="197"/>
        <end position="256"/>
    </location>
</feature>
<feature type="coiled-coil region" evidence="2">
    <location>
        <begin position="326"/>
        <end position="555"/>
    </location>
</feature>
<feature type="compositionally biased region" description="Basic and acidic residues" evidence="4">
    <location>
        <begin position="1028"/>
        <end position="1044"/>
    </location>
</feature>
<feature type="compositionally biased region" description="Acidic residues" evidence="4">
    <location>
        <begin position="1060"/>
        <end position="1083"/>
    </location>
</feature>
<feature type="splice variant" id="VSP_026161" description="In isoform 2." evidence="16">
    <location>
        <begin position="987"/>
        <end position="1020"/>
    </location>
</feature>
<feature type="splice variant" id="VSP_026162" description="In isoform 2." evidence="16">
    <location>
        <begin position="1099"/>
        <end position="1144"/>
    </location>
</feature>
<feature type="sequence variant" id="VAR_066476" description="Found in a patient with Leber congenital amaurosis." evidence="9">
    <original>S</original>
    <variation>G</variation>
    <location>
        <position position="199"/>
    </location>
</feature>
<feature type="sequence variant" id="VAR_066477" description="Associated with the development of retinal degeneration in individuals with ciliopathies caused by mutations in other genes; found in patients with Leber congenital amaurosis, Senior-Loken syndrome, Joubert syndrome and Bardet-Biedl syndrome; abrogates interaction with RPGR; dbSNP:rs61747071." evidence="9">
    <original>A</original>
    <variation>T</variation>
    <location>
        <position position="229"/>
    </location>
</feature>
<feature type="sequence variant" id="VAR_076824" description="In JBTS7; dbSNP:rs375776718." evidence="8">
    <original>E</original>
    <variation>K</variation>
    <location>
        <position position="393"/>
    </location>
</feature>
<feature type="sequence variant" id="VAR_066478" description="In dbSNP:rs138155747." evidence="9">
    <original>L</original>
    <variation>S</variation>
    <location>
        <position position="447"/>
    </location>
</feature>
<feature type="sequence variant" id="VAR_066479" description="Found in a patient with Leber congenital amaurosis; dbSNP:rs147331527." evidence="9">
    <original>L</original>
    <variation>F</variation>
    <location>
        <position position="546"/>
    </location>
</feature>
<feature type="sequence variant" id="VAR_069234" description="In JBTS7; dbSNP:rs772900011." evidence="14">
    <original>Q</original>
    <variation>R</variation>
    <location>
        <position position="550"/>
    </location>
</feature>
<feature type="sequence variant" id="VAR_039393" description="In JBTS7; affects interaction with NPHP4; dbSNP:rs121918198." evidence="6 7 8">
    <original>T</original>
    <variation>P</variation>
    <location>
        <position position="615"/>
    </location>
</feature>
<feature type="sequence variant" id="VAR_076825" description="In JBTS7; dbSNP:rs898062661." evidence="8">
    <original>C</original>
    <variation>R</variation>
    <location>
        <position position="633"/>
    </location>
</feature>
<feature type="sequence variant" id="VAR_066480" description="In dbSNP:rs145572901." evidence="9">
    <original>V</original>
    <variation>I</variation>
    <location>
        <position position="647"/>
    </location>
</feature>
<feature type="sequence variant" id="VAR_063805" description="In COACH3; dbSNP:rs267607020." evidence="11">
    <original>S</original>
    <variation>P</variation>
    <location>
        <position position="659"/>
    </location>
</feature>
<feature type="sequence variant" id="VAR_039394" description="In JBTS7; also in a patient with Leber congenital amaurosis; affects interaction with NPHP4; dbSNP:rs532768944." evidence="7 9">
    <original>T</original>
    <variation>I</variation>
    <location>
        <position position="677"/>
    </location>
</feature>
<feature type="sequence variant" id="VAR_039395" description="In JBTS7; seems not to affect interaction with NPHP4; dbSNP:rs121918200." evidence="7">
    <original>A</original>
    <variation>P</variation>
    <location>
        <position position="695"/>
    </location>
</feature>
<feature type="sequence variant" id="VAR_039396" description="In dbSNP:rs2302677.">
    <original>R</original>
    <variation>Q</variation>
    <location>
        <position position="744"/>
    </location>
</feature>
<feature type="sequence variant" id="VAR_066481" description="In a patient with Leber congenital amaurosis; dbSNP:rs776795273." evidence="9">
    <original>R</original>
    <variation>L</variation>
    <location>
        <position position="937"/>
    </location>
</feature>
<feature type="sequence variant" id="VAR_039397" description="In dbSNP:rs2111119." evidence="9">
    <original>G</original>
    <variation>S</variation>
    <location>
        <position position="1025"/>
    </location>
</feature>
<feature type="sequence variant" id="VAR_065556" description="In a patient with Meckel-Gruber like syndrome also carrying L-220 and V-280 in TTC21B; also found in patients with Leber congenital amaurosis and a patient with Bardet-Biedl syndrome; dbSNP:rs139974543." evidence="9 12">
    <original>A</original>
    <variation>G</variation>
    <location>
        <position position="1183"/>
    </location>
</feature>
<feature type="sequence variant" id="VAR_066482" description="In MKS5; dbSNP:rs151332923." evidence="9">
    <original>R</original>
    <variation>C</variation>
    <location>
        <position position="1236"/>
    </location>
</feature>
<feature type="sequence variant" id="VAR_039398" description="In dbSNP:rs3213758." evidence="9">
    <original>D</original>
    <variation>N</variation>
    <location>
        <position position="1264"/>
    </location>
</feature>
<feature type="sequence variant" id="VAR_066483" description="In patients with Leber congenital amaurosis." evidence="9">
    <original>D</original>
    <variation>Y</variation>
    <location>
        <position position="1264"/>
    </location>
</feature>
<feature type="sequence conflict" description="In Ref. 4; BAA76849." evidence="17" ref="4">
    <original>R</original>
    <variation>K</variation>
    <location>
        <position position="300"/>
    </location>
</feature>
<feature type="sequence conflict" description="In Ref. 1; CAH18439." evidence="17" ref="1">
    <original>G</original>
    <variation>D</variation>
    <location>
        <position position="575"/>
    </location>
</feature>
<feature type="sequence conflict" description="In Ref. 1; CAH18439." evidence="17" ref="1">
    <original>D</original>
    <variation>G</variation>
    <location>
        <position position="595"/>
    </location>
</feature>
<feature type="sequence conflict" description="In Ref. 1; CAH18439." evidence="17" ref="1">
    <original>P</original>
    <variation>L</variation>
    <location>
        <position position="992"/>
    </location>
</feature>
<feature type="sequence conflict" description="In Ref. 1; CAH18439." evidence="17" ref="1">
    <original>T</original>
    <variation>S</variation>
    <location>
        <position position="1143"/>
    </location>
</feature>
<feature type="strand" evidence="18">
    <location>
        <begin position="605"/>
        <end position="614"/>
    </location>
</feature>
<feature type="helix" evidence="18">
    <location>
        <begin position="618"/>
        <end position="623"/>
    </location>
</feature>
<feature type="strand" evidence="18">
    <location>
        <begin position="630"/>
        <end position="635"/>
    </location>
</feature>
<feature type="strand" evidence="18">
    <location>
        <begin position="648"/>
        <end position="652"/>
    </location>
</feature>
<feature type="strand" evidence="18">
    <location>
        <begin position="657"/>
        <end position="663"/>
    </location>
</feature>
<feature type="helix" evidence="18">
    <location>
        <begin position="667"/>
        <end position="675"/>
    </location>
</feature>
<feature type="strand" evidence="18">
    <location>
        <begin position="678"/>
        <end position="685"/>
    </location>
</feature>
<feature type="strand" evidence="18">
    <location>
        <begin position="690"/>
        <end position="698"/>
    </location>
</feature>
<feature type="helix" evidence="18">
    <location>
        <begin position="702"/>
        <end position="705"/>
    </location>
</feature>
<feature type="strand" evidence="18">
    <location>
        <begin position="710"/>
        <end position="716"/>
    </location>
</feature>
<feature type="strand" evidence="18">
    <location>
        <begin position="718"/>
        <end position="721"/>
    </location>
</feature>
<feature type="strand" evidence="18">
    <location>
        <begin position="726"/>
        <end position="737"/>
    </location>
</feature>
<accession>Q68CZ1</accession>
<accession>A0PJ88</accession>
<accession>Q9Y2K8</accession>
<organism>
    <name type="scientific">Homo sapiens</name>
    <name type="common">Human</name>
    <dbReference type="NCBI Taxonomy" id="9606"/>
    <lineage>
        <taxon>Eukaryota</taxon>
        <taxon>Metazoa</taxon>
        <taxon>Chordata</taxon>
        <taxon>Craniata</taxon>
        <taxon>Vertebrata</taxon>
        <taxon>Euteleostomi</taxon>
        <taxon>Mammalia</taxon>
        <taxon>Eutheria</taxon>
        <taxon>Euarchontoglires</taxon>
        <taxon>Primates</taxon>
        <taxon>Haplorrhini</taxon>
        <taxon>Catarrhini</taxon>
        <taxon>Hominidae</taxon>
        <taxon>Homo</taxon>
    </lineage>
</organism>
<evidence type="ECO:0000250" key="1">
    <source>
        <dbReference type="UniProtKB" id="Q8CG73"/>
    </source>
</evidence>
<evidence type="ECO:0000255" key="2"/>
<evidence type="ECO:0000255" key="3">
    <source>
        <dbReference type="PROSITE-ProRule" id="PRU00041"/>
    </source>
</evidence>
<evidence type="ECO:0000256" key="4">
    <source>
        <dbReference type="SAM" id="MobiDB-lite"/>
    </source>
</evidence>
<evidence type="ECO:0000269" key="5">
    <source>
    </source>
</evidence>
<evidence type="ECO:0000269" key="6">
    <source>
    </source>
</evidence>
<evidence type="ECO:0000269" key="7">
    <source>
    </source>
</evidence>
<evidence type="ECO:0000269" key="8">
    <source>
    </source>
</evidence>
<evidence type="ECO:0000269" key="9">
    <source>
    </source>
</evidence>
<evidence type="ECO:0000269" key="10">
    <source>
    </source>
</evidence>
<evidence type="ECO:0000269" key="11">
    <source>
    </source>
</evidence>
<evidence type="ECO:0000269" key="12">
    <source>
    </source>
</evidence>
<evidence type="ECO:0000269" key="13">
    <source>
    </source>
</evidence>
<evidence type="ECO:0000269" key="14">
    <source>
    </source>
</evidence>
<evidence type="ECO:0000269" key="15">
    <source>
    </source>
</evidence>
<evidence type="ECO:0000303" key="16">
    <source>
    </source>
</evidence>
<evidence type="ECO:0000305" key="17"/>
<evidence type="ECO:0007829" key="18">
    <source>
        <dbReference type="PDB" id="2YRB"/>
    </source>
</evidence>